<dbReference type="EMBL" id="CP001022">
    <property type="protein sequence ID" value="ACB60578.1"/>
    <property type="molecule type" value="Genomic_DNA"/>
</dbReference>
<dbReference type="RefSeq" id="WP_012370001.1">
    <property type="nucleotide sequence ID" value="NC_010556.1"/>
</dbReference>
<dbReference type="SMR" id="B1YE76"/>
<dbReference type="STRING" id="262543.Exig_1099"/>
<dbReference type="KEGG" id="esi:Exig_1099"/>
<dbReference type="eggNOG" id="COG3763">
    <property type="taxonomic scope" value="Bacteria"/>
</dbReference>
<dbReference type="HOGENOM" id="CLU_180108_0_1_9"/>
<dbReference type="OrthoDB" id="1769076at2"/>
<dbReference type="Proteomes" id="UP000001681">
    <property type="component" value="Chromosome"/>
</dbReference>
<dbReference type="GO" id="GO:0005886">
    <property type="term" value="C:plasma membrane"/>
    <property type="evidence" value="ECO:0007669"/>
    <property type="project" value="UniProtKB-SubCell"/>
</dbReference>
<dbReference type="HAMAP" id="MF_00363">
    <property type="entry name" value="UPF0154"/>
    <property type="match status" value="1"/>
</dbReference>
<dbReference type="InterPro" id="IPR005359">
    <property type="entry name" value="UPF0154"/>
</dbReference>
<dbReference type="Pfam" id="PF03672">
    <property type="entry name" value="UPF0154"/>
    <property type="match status" value="1"/>
</dbReference>
<proteinExistence type="inferred from homology"/>
<accession>B1YE76</accession>
<protein>
    <recommendedName>
        <fullName evidence="1">UPF0154 protein Exig_1099</fullName>
    </recommendedName>
</protein>
<sequence>MATWIWILIALLCLVAGVALGFYIARRYMMNYLEQNPPINEDMIKTLMMQMGQKPSQKKVNQVMRSMSGSMKSPKK</sequence>
<gene>
    <name type="ordered locus">Exig_1099</name>
</gene>
<reference key="1">
    <citation type="submission" date="2008-04" db="EMBL/GenBank/DDBJ databases">
        <title>Complete sequence of chromosome of Exiguobacterium sibiricum 255-15.</title>
        <authorList>
            <consortium name="US DOE Joint Genome Institute"/>
            <person name="Copeland A."/>
            <person name="Lucas S."/>
            <person name="Lapidus A."/>
            <person name="Glavina del Rio T."/>
            <person name="Dalin E."/>
            <person name="Tice H."/>
            <person name="Bruce D."/>
            <person name="Goodwin L."/>
            <person name="Pitluck S."/>
            <person name="Kiss H."/>
            <person name="Chertkov O."/>
            <person name="Monk C."/>
            <person name="Brettin T."/>
            <person name="Detter J.C."/>
            <person name="Han C."/>
            <person name="Kuske C.R."/>
            <person name="Schmutz J."/>
            <person name="Larimer F."/>
            <person name="Land M."/>
            <person name="Hauser L."/>
            <person name="Kyrpides N."/>
            <person name="Mikhailova N."/>
            <person name="Vishnivetskaya T."/>
            <person name="Rodrigues D.F."/>
            <person name="Gilichinsky D."/>
            <person name="Tiedje J."/>
            <person name="Richardson P."/>
        </authorList>
    </citation>
    <scope>NUCLEOTIDE SEQUENCE [LARGE SCALE GENOMIC DNA]</scope>
    <source>
        <strain>DSM 17290 / CCUG 55495 / CIP 109462 / JCM 13490 / 255-15</strain>
    </source>
</reference>
<name>Y1099_EXIS2</name>
<feature type="chain" id="PRO_1000121045" description="UPF0154 protein Exig_1099">
    <location>
        <begin position="1"/>
        <end position="76"/>
    </location>
</feature>
<feature type="transmembrane region" description="Helical" evidence="1">
    <location>
        <begin position="4"/>
        <end position="24"/>
    </location>
</feature>
<feature type="region of interest" description="Disordered" evidence="2">
    <location>
        <begin position="54"/>
        <end position="76"/>
    </location>
</feature>
<comment type="subcellular location">
    <subcellularLocation>
        <location evidence="1">Cell membrane</location>
        <topology evidence="1">Single-pass membrane protein</topology>
    </subcellularLocation>
</comment>
<comment type="similarity">
    <text evidence="1">Belongs to the UPF0154 family.</text>
</comment>
<organism>
    <name type="scientific">Exiguobacterium sibiricum (strain DSM 17290 / CCUG 55495 / CIP 109462 / JCM 13490 / 255-15)</name>
    <dbReference type="NCBI Taxonomy" id="262543"/>
    <lineage>
        <taxon>Bacteria</taxon>
        <taxon>Bacillati</taxon>
        <taxon>Bacillota</taxon>
        <taxon>Bacilli</taxon>
        <taxon>Bacillales</taxon>
        <taxon>Bacillales Family XII. Incertae Sedis</taxon>
        <taxon>Exiguobacterium</taxon>
    </lineage>
</organism>
<evidence type="ECO:0000255" key="1">
    <source>
        <dbReference type="HAMAP-Rule" id="MF_00363"/>
    </source>
</evidence>
<evidence type="ECO:0000256" key="2">
    <source>
        <dbReference type="SAM" id="MobiDB-lite"/>
    </source>
</evidence>
<keyword id="KW-1003">Cell membrane</keyword>
<keyword id="KW-0472">Membrane</keyword>
<keyword id="KW-1185">Reference proteome</keyword>
<keyword id="KW-0812">Transmembrane</keyword>
<keyword id="KW-1133">Transmembrane helix</keyword>